<gene>
    <name evidence="2" type="primary">MSP1</name>
</gene>
<sequence length="1630" mass="187291">MKIIFFLCSFLFFIINTQCVTHESYQELVKKLEALEDAVLTGYSLFHKEKMILNEEEITTKGASAQSGTSGTSGTSGPSGPSGTSPSSRSNTLPRSNTSSGASPPADASDSDAKSYADLKHRVRNYLLTIKELKYPQLFDLTNHMLTLCDNIHGFKYLIDGYEEINELLYKLNFYFDLLRAKLNDVCANDYCQIPFNLKIRANELDVLKKLVFGYRKPLDNIKDNVGKMEDYIKKNKKTIENINELIEESKKTIDKNKNATKEEEKKKLYQAQYDLSIYNKQLEEAHNLISVLEKRIDTLKKNENIKELLDKINEIKNPPPANSGNTPNTLLDKNKKIEEHEKEIKEIAKTIKFNIDSLFTDPLELEYYLREKNKNIDISAKVETKESTEPNEYPNGVTYPLSYNDINNALNELNSFGDLINPFDYTKEPSKNIYTDNERKKFINEIKEKIKIEKKKIESDKKSYEDRSKSLNDITKEYEKLLNEIYDSKFNNNIDLTNFEKMMGKRYSYKVEKLTHHNTFASYENSKHNLEKLTKALKYMEDYSLRNIVVEKELKYYKNLISKIENEIETLVENIKKDEEQLFEKKITKDENKPDEKILEVSDIVKVQVQKVLLMNKIDELKKTQLILKNVELKHNIHVPNSYKQENKQEPYYLIVLKKEIDKLKVFMPKVESLINEEKKNIKTEGQSDNSEPSTEGEITGQATTKPGQQAGSALEGDSVQAQAQEQKQAQPPVPVPVPEAKAQVPTPPAPVNNKTENVSKLDYLEKLYEFLNTSYICHKYILVSHSTMNEKILKQYKITKEEESKLSSCDPLDLLFNIQNNIPVMYSMFDSLNNSLSQLFMEIYEKEMVCNLYKLKDNDKIKNLLEEAKKVSTSVKTLSSSSMQPLSLTPQDKPEVSANDDTSHSTNLNNSLKLFENILSLGKNKNIYQELIGQKSSENFYEKILKDSDTFYNESFTNFVKSKADDINSLNDESKRKKLEEDINKLKKTLQLSFDLYNKYKLKLERLFDKKKTVGKYKMQIKKLTLLKEQLESKLNSLNNPKHVLQNFSVFFNKKKEAEIAETENTLENTKILLKHYKGLVKYYNGESSPLKTLSEESIQTEDNYASLENFKVLSKLEGKLKDNLNLEKKKLSYLSSGLHHLIAELKEVIKNKNYTGNSPSENNTDVNNALESYKKFLPEGTDVATVVSESGSDTLEQSQPKKPASTHVGAESNTITTSQNVDDEVDDVIIVPIFGESEEDYDDLGQVVTGEAVTPSVIDNILSKIENEYEVLYLKPLAGVYRSLKKQLENNVMTFNVNVKDILNSRFNKRENFKNVLESDLIPYKDLTSSNYVVKDPYKFLNKEKRDKFLSSYNYIKDSIDTDINFANDVLGYYKILSEKYKSDLDSIKKYINDKQGENEKYLPFLNNIETLYKTVNDKIDLFVIHLEAKVLNYTYEKSNVEVKIKELNYLKTIQDKLADFKKNNNFVGIADLSTDYNHNNLLTKFLSTGMVFENLAKTVLSNLLDGNLQGMLNISQHQCVKKQCPQNSGCFRHLDEREECKCLLNYKQEGDKCVENPNPTCNENNGGCDADAKCTEEDSGSNGKKITCECTKPDSYPLFDGIFCSSSNFLGISFLLILMLILYSFI</sequence>
<feature type="signal peptide" evidence="3">
    <location>
        <begin position="1"/>
        <end position="19"/>
    </location>
</feature>
<feature type="chain" id="PRO_0000024554" description="Merozoite surface protein 1">
    <location>
        <begin position="20"/>
        <end position="1609"/>
    </location>
</feature>
<feature type="chain" id="PRO_0000459284" description="p83 subunit" evidence="1">
    <location>
        <begin position="20"/>
        <end position="688"/>
    </location>
</feature>
<feature type="chain" id="PRO_0000459285" description="p30 subunit" evidence="1">
    <location>
        <begin position="689"/>
        <end position="901"/>
    </location>
</feature>
<feature type="chain" id="PRO_0000459286" description="p38 subunit" evidence="1">
    <location>
        <begin position="902"/>
        <end position="1254"/>
    </location>
</feature>
<feature type="chain" id="PRO_0000459287" description="p42 subunit" evidence="1">
    <location>
        <begin position="1255"/>
        <end position="1609"/>
    </location>
</feature>
<feature type="chain" id="PRO_0000459288" description="p33 subunit" evidence="1">
    <location>
        <begin position="1255"/>
        <end position="1516"/>
    </location>
</feature>
<feature type="chain" id="PRO_0000459289" description="p19 subunit" evidence="1">
    <location>
        <begin position="1517"/>
        <end position="1609"/>
    </location>
</feature>
<feature type="propeptide" id="PRO_0000024555" description="Removed in mature form" evidence="3">
    <location>
        <begin position="1610"/>
        <end position="1630"/>
    </location>
</feature>
<feature type="domain" description="EGF-like 1" evidence="1">
    <location>
        <begin position="1521"/>
        <end position="1561"/>
    </location>
</feature>
<feature type="domain" description="EGF-like 2" evidence="1">
    <location>
        <begin position="1562"/>
        <end position="1610"/>
    </location>
</feature>
<feature type="region of interest" description="Disordered" evidence="4">
    <location>
        <begin position="60"/>
        <end position="113"/>
    </location>
</feature>
<feature type="region of interest" description="Tripeptide SG(TP) repeat">
    <location>
        <begin position="67"/>
        <end position="84"/>
    </location>
</feature>
<feature type="region of interest" description="Disordered" evidence="4">
    <location>
        <begin position="680"/>
        <end position="755"/>
    </location>
</feature>
<feature type="region of interest" description="Disordered" evidence="4">
    <location>
        <begin position="884"/>
        <end position="906"/>
    </location>
</feature>
<feature type="region of interest" description="Required for binding to host erythrocyte cell membrane" evidence="1">
    <location>
        <begin position="993"/>
        <end position="1107"/>
    </location>
</feature>
<feature type="region of interest" description="Disordered" evidence="4">
    <location>
        <begin position="1190"/>
        <end position="1220"/>
    </location>
</feature>
<feature type="compositionally biased region" description="Low complexity" evidence="4">
    <location>
        <begin position="67"/>
        <end position="88"/>
    </location>
</feature>
<feature type="compositionally biased region" description="Polar residues" evidence="4">
    <location>
        <begin position="89"/>
        <end position="98"/>
    </location>
</feature>
<feature type="compositionally biased region" description="Low complexity" evidence="4">
    <location>
        <begin position="99"/>
        <end position="108"/>
    </location>
</feature>
<feature type="compositionally biased region" description="Polar residues" evidence="4">
    <location>
        <begin position="685"/>
        <end position="695"/>
    </location>
</feature>
<feature type="compositionally biased region" description="Polar residues" evidence="4">
    <location>
        <begin position="702"/>
        <end position="713"/>
    </location>
</feature>
<feature type="compositionally biased region" description="Low complexity" evidence="4">
    <location>
        <begin position="721"/>
        <end position="732"/>
    </location>
</feature>
<feature type="compositionally biased region" description="Polar residues" evidence="4">
    <location>
        <begin position="1190"/>
        <end position="1203"/>
    </location>
</feature>
<feature type="lipid moiety-binding region" description="GPI-anchor amidated serine" evidence="3">
    <location>
        <position position="1609"/>
    </location>
</feature>
<feature type="glycosylation site" description="N-linked (GlcNAc...) asparagine" evidence="3">
    <location>
        <position position="97"/>
    </location>
</feature>
<feature type="glycosylation site" description="N-linked (GlcNAc...) asparagine" evidence="3">
    <location>
        <position position="259"/>
    </location>
</feature>
<feature type="glycosylation site" description="N-linked (GlcNAc...) asparagine" evidence="3">
    <location>
        <position position="755"/>
    </location>
</feature>
<feature type="glycosylation site" description="N-linked (GlcNAc...) asparagine" evidence="3">
    <location>
        <position position="759"/>
    </location>
</feature>
<feature type="glycosylation site" description="N-linked (GlcNAc...) asparagine" evidence="3">
    <location>
        <position position="774"/>
    </location>
</feature>
<feature type="glycosylation site" description="N-linked (GlcNAc...) asparagine" evidence="3">
    <location>
        <position position="835"/>
    </location>
</feature>
<feature type="glycosylation site" description="N-linked (GlcNAc...) asparagine" evidence="3">
    <location>
        <position position="911"/>
    </location>
</feature>
<feature type="glycosylation site" description="N-linked (GlcNAc...) asparagine" evidence="3">
    <location>
        <position position="955"/>
    </location>
</feature>
<feature type="glycosylation site" description="N-linked (GlcNAc...) asparagine" evidence="3">
    <location>
        <position position="1049"/>
    </location>
</feature>
<feature type="glycosylation site" description="N-linked (GlcNAc...) asparagine" evidence="3">
    <location>
        <position position="1156"/>
    </location>
</feature>
<feature type="glycosylation site" description="N-linked (GlcNAc...) asparagine" evidence="3">
    <location>
        <position position="1165"/>
    </location>
</feature>
<feature type="glycosylation site" description="N-linked (GlcNAc...) asparagine" evidence="3">
    <location>
        <position position="1436"/>
    </location>
</feature>
<feature type="glycosylation site" description="N-linked (GlcNAc...) asparagine" evidence="3">
    <location>
        <position position="1517"/>
    </location>
</feature>
<feature type="disulfide bond" evidence="1">
    <location>
        <begin position="1523"/>
        <end position="1534"/>
    </location>
</feature>
<feature type="disulfide bond" evidence="1">
    <location>
        <begin position="1528"/>
        <end position="1544"/>
    </location>
</feature>
<feature type="disulfide bond" evidence="1">
    <location>
        <begin position="1546"/>
        <end position="1557"/>
    </location>
</feature>
<feature type="disulfide bond" evidence="1">
    <location>
        <begin position="1565"/>
        <end position="1578"/>
    </location>
</feature>
<feature type="disulfide bond" evidence="1">
    <location>
        <begin position="1572"/>
        <end position="1592"/>
    </location>
</feature>
<feature type="disulfide bond" evidence="1">
    <location>
        <begin position="1594"/>
        <end position="1608"/>
    </location>
</feature>
<accession>P04932</accession>
<evidence type="ECO:0000250" key="1">
    <source>
        <dbReference type="UniProtKB" id="P04933"/>
    </source>
</evidence>
<evidence type="ECO:0000250" key="2">
    <source>
        <dbReference type="UniProtKB" id="Q8I0U8"/>
    </source>
</evidence>
<evidence type="ECO:0000255" key="3"/>
<evidence type="ECO:0000256" key="4">
    <source>
        <dbReference type="SAM" id="MobiDB-lite"/>
    </source>
</evidence>
<evidence type="ECO:0000269" key="5">
    <source>
    </source>
</evidence>
<evidence type="ECO:0000303" key="6">
    <source>
    </source>
</evidence>
<name>MSP1_PLAFK</name>
<proteinExistence type="inferred from homology"/>
<dbReference type="EMBL" id="X03371">
    <property type="protein sequence ID" value="CAA27070.1"/>
    <property type="molecule type" value="Genomic_DNA"/>
</dbReference>
<dbReference type="BMRB" id="P04932"/>
<dbReference type="SMR" id="P04932"/>
<dbReference type="GlyCosmos" id="P04932">
    <property type="glycosylation" value="13 sites, No reported glycans"/>
</dbReference>
<dbReference type="GO" id="GO:0005576">
    <property type="term" value="C:extracellular region"/>
    <property type="evidence" value="ECO:0007669"/>
    <property type="project" value="UniProtKB-SubCell"/>
</dbReference>
<dbReference type="GO" id="GO:0005886">
    <property type="term" value="C:plasma membrane"/>
    <property type="evidence" value="ECO:0007669"/>
    <property type="project" value="UniProtKB-SubCell"/>
</dbReference>
<dbReference type="GO" id="GO:0098552">
    <property type="term" value="C:side of membrane"/>
    <property type="evidence" value="ECO:0007669"/>
    <property type="project" value="UniProtKB-KW"/>
</dbReference>
<dbReference type="GO" id="GO:0005774">
    <property type="term" value="C:vacuolar membrane"/>
    <property type="evidence" value="ECO:0007669"/>
    <property type="project" value="UniProtKB-SubCell"/>
</dbReference>
<dbReference type="Gene3D" id="2.10.25.10">
    <property type="entry name" value="Laminin"/>
    <property type="match status" value="2"/>
</dbReference>
<dbReference type="InterPro" id="IPR010901">
    <property type="entry name" value="MSP1_C"/>
</dbReference>
<dbReference type="InterPro" id="IPR024730">
    <property type="entry name" value="MSP1_EGF_1"/>
</dbReference>
<dbReference type="Pfam" id="PF12946">
    <property type="entry name" value="EGF_MSP1_1"/>
    <property type="match status" value="1"/>
</dbReference>
<dbReference type="Pfam" id="PF07462">
    <property type="entry name" value="MSP1_C"/>
    <property type="match status" value="1"/>
</dbReference>
<dbReference type="SUPFAM" id="SSF57196">
    <property type="entry name" value="EGF/Laminin"/>
    <property type="match status" value="2"/>
</dbReference>
<reference key="1">
    <citation type="journal article" date="1985" name="EMBO J.">
        <title>Polymorphism of the precursor for the major surface antigens of Plasmodium falciparum merozoites: studies at the genetic level.</title>
        <authorList>
            <person name="Mackay M."/>
            <person name="Goman M."/>
            <person name="Bone N."/>
            <person name="Hyde J.E."/>
            <person name="Scaife J."/>
            <person name="Certa U."/>
            <person name="Stunnenberg H."/>
            <person name="Bujard H."/>
        </authorList>
    </citation>
    <scope>NUCLEOTIDE SEQUENCE [GENOMIC DNA]</scope>
    <scope>POLYMORPHISM</scope>
</reference>
<reference key="2">
    <citation type="submission" date="1995-06" db="EMBL/GenBank/DDBJ databases">
        <authorList>
            <person name="Pan W."/>
            <person name="Tolle R."/>
            <person name="Bujard H."/>
        </authorList>
    </citation>
    <scope>NUCLEOTIDE SEQUENCE [GENOMIC DNA]</scope>
    <scope>SEQUENCE REVISION</scope>
</reference>
<comment type="function">
    <text evidence="1 2">During the asexual blood stage, involved in merozoite egress from host erythrocytes possibly via its interaction with the host cytoskeleton protein spectrin resulting in the destabilization of the host cytoskeleton and thus leading to erythrocyte cell membrane rupture (By similarity). Involved in the binding to host erythrocytes and is required for host erythrocyte invasion (By similarity).</text>
</comment>
<comment type="function">
    <molecule>p33 subunit</molecule>
    <text evidence="2">By binding to host proinflammatory cytokine S100P may interfere with host immune responses.</text>
</comment>
<comment type="function">
    <molecule>p19 subunit</molecule>
    <text evidence="2">Involved in merozoite invasion of host erythrocytes. May play a role in the biogenesis and/or function of the food vacuole during the intraerythrocytic development.</text>
</comment>
<comment type="subunit">
    <text evidence="2">Forms a complex composed of subunits p83, p30, p38, and p42 which remain non-covalently associated; the complex is formed at the merozoite surface prior to egress from host erythrocytes. Forms a complex composed of processed MSP1 subunits, MSP6 subunit p36 and MSP7; the complex is formed at the merozoite surface prior to egress from host erythrocytes. Within the complex, interacts (via subunit p38) with MSP6 subunit p36 and (via subunits p83, p30 and p38) with MSP7 (via subunit p22). Forms a complex composed of MSP1, MSP6, DBLMSP1 and DBLMSP2. Within the complex, interacts (via subunit p38) with DBLMSP1 and DBLMSP2. Forms a complex composed of MSP1, and rhoptry proteins RhopH3, RAP1 and CLAG9/RhopH3. Within the complex, interacts (via subunits p42 and p19) with RhopH3 (via C-terminus). Forms a complex composed of MSP1, MSP6, MSP7, MSP9 and MSP3; within the complex, MSP6 and MSP9 mediate the binding to the host erythrocyte. Interacts (via subunits p19 and p42) with MSP9; the interaction is direct; MSP1 subunits p19 or p42, and MSP9 form a co-ligand complex that interacts with host SLC4A1/Band 3 protein. May interact with PFD6. Interacts with host spectrin.</text>
</comment>
<comment type="subunit">
    <molecule>p83 subunit</molecule>
    <text evidence="2">Interacts with host glycophorin GYPA in a sialic acid-independent manner.</text>
</comment>
<comment type="subunit">
    <molecule>p33 subunit</molecule>
    <text evidence="2">Interacts with host proinflammatory cytokine S100P; the interaction blocks S100P inflammatory and chemotactic activities.</text>
</comment>
<comment type="subunit">
    <molecule>p42 subunit</molecule>
    <text evidence="2">Interacts with host SLC4A1/Band 3 (via 5ABC region) on the host erythrocyte surface in a sialic acid-independent manner.</text>
</comment>
<comment type="subcellular location">
    <subcellularLocation>
        <location evidence="1">Cell membrane</location>
        <topology evidence="3">Lipid-anchor</topology>
        <topology evidence="3">GPI-anchor</topology>
    </subcellularLocation>
    <subcellularLocation>
        <location evidence="1">Secreted</location>
    </subcellularLocation>
</comment>
<comment type="subcellular location">
    <molecule>p19 subunit</molecule>
    <subcellularLocation>
        <location evidence="2">Cell membrane</location>
        <topology evidence="3">Lipid-anchor</topology>
        <topology evidence="3">GPI-anchor</topology>
    </subcellularLocation>
    <subcellularLocation>
        <location evidence="2">Vacuole membrane</location>
        <topology evidence="3">Lipid-anchor</topology>
        <topology evidence="3">GPI-anchor</topology>
    </subcellularLocation>
    <text evidence="2">In free merozoites, localizes to the cell membrane (By similarity). Following merozoite invasion of host erythrocytes, p19 subunit is endocytosed into small food vacuoles in the ring stage and persists throughout the subsequent intra-erythrocytic stages at the surface of the food vacuole where it forms clusters (By similarity).</text>
</comment>
<comment type="PTM">
    <text evidence="1 2">The p190 precursor is cleaved by SUB1 prior to merozoite egress into 4 subunits p83, p30, p38, and p42 which remain non-covalently associated. SUB1-mediated proteolytic cleavage occurs in an orderly manner; the first cleavage occurs at the p83/p30 site, followed by cleavage at the p30/p38 site, the last cleavage occurs at the p38/p42 site. The order of cleavage is essential for parasite viability (By similarity). SUB1-mediated processing is essential for merozoite egress (By similarity). In a second processing step during erythrocyte invasion, p42 is cleaved by SUB2 into p33 and p19; the latter remains attached to the merozoite surface via its GPI-anchor and stays on the surface during the subsequent ring stage (By similarity).</text>
</comment>
<comment type="polymorphism">
    <text evidence="5">The sequence varies across Plasmodium strains (PubMed:3004972). There are two major dimorphic forms of MSP1, typified by those expressed by the 3D7 and Wellcome P.falciparum isolates (PubMed:3004972).</text>
</comment>
<keyword id="KW-1003">Cell membrane</keyword>
<keyword id="KW-1015">Disulfide bond</keyword>
<keyword id="KW-0245">EGF-like domain</keyword>
<keyword id="KW-0325">Glycoprotein</keyword>
<keyword id="KW-0336">GPI-anchor</keyword>
<keyword id="KW-0449">Lipoprotein</keyword>
<keyword id="KW-0461">Malaria</keyword>
<keyword id="KW-0472">Membrane</keyword>
<keyword id="KW-0477">Merozoite</keyword>
<keyword id="KW-0677">Repeat</keyword>
<keyword id="KW-0964">Secreted</keyword>
<keyword id="KW-0732">Signal</keyword>
<keyword id="KW-0926">Vacuole</keyword>
<organism>
    <name type="scientific">Plasmodium falciparum (isolate K1 / Thailand)</name>
    <dbReference type="NCBI Taxonomy" id="5839"/>
    <lineage>
        <taxon>Eukaryota</taxon>
        <taxon>Sar</taxon>
        <taxon>Alveolata</taxon>
        <taxon>Apicomplexa</taxon>
        <taxon>Aconoidasida</taxon>
        <taxon>Haemosporida</taxon>
        <taxon>Plasmodiidae</taxon>
        <taxon>Plasmodium</taxon>
        <taxon>Plasmodium (Laverania)</taxon>
    </lineage>
</organism>
<protein>
    <recommendedName>
        <fullName evidence="2">Merozoite surface protein 1</fullName>
    </recommendedName>
    <alternativeName>
        <fullName evidence="6">Merozoite surface antigen</fullName>
    </alternativeName>
    <alternativeName>
        <fullName evidence="6">PMMSA</fullName>
    </alternativeName>
    <alternativeName>
        <fullName evidence="6">p190</fullName>
    </alternativeName>
    <component>
        <recommendedName>
            <fullName evidence="1">p83 subunit</fullName>
        </recommendedName>
    </component>
    <component>
        <recommendedName>
            <fullName evidence="1">p30 subunit</fullName>
        </recommendedName>
    </component>
    <component>
        <recommendedName>
            <fullName evidence="1">p38 subunit</fullName>
        </recommendedName>
    </component>
    <component>
        <recommendedName>
            <fullName evidence="1">p42 subunit</fullName>
        </recommendedName>
    </component>
    <component>
        <recommendedName>
            <fullName evidence="1">p33 subunit</fullName>
        </recommendedName>
    </component>
    <component>
        <recommendedName>
            <fullName evidence="1">p19 subunit</fullName>
        </recommendedName>
    </component>
</protein>